<proteinExistence type="inferred from homology"/>
<name>CYOE_FRATW</name>
<organism>
    <name type="scientific">Francisella tularensis subsp. tularensis (strain WY96-3418)</name>
    <dbReference type="NCBI Taxonomy" id="418136"/>
    <lineage>
        <taxon>Bacteria</taxon>
        <taxon>Pseudomonadati</taxon>
        <taxon>Pseudomonadota</taxon>
        <taxon>Gammaproteobacteria</taxon>
        <taxon>Thiotrichales</taxon>
        <taxon>Francisellaceae</taxon>
        <taxon>Francisella</taxon>
    </lineage>
</organism>
<feature type="chain" id="PRO_0000326901" description="Protoheme IX farnesyltransferase">
    <location>
        <begin position="1"/>
        <end position="282"/>
    </location>
</feature>
<feature type="transmembrane region" description="Helical" evidence="1">
    <location>
        <begin position="9"/>
        <end position="29"/>
    </location>
</feature>
<feature type="transmembrane region" description="Helical" evidence="1">
    <location>
        <begin position="39"/>
        <end position="59"/>
    </location>
</feature>
<feature type="transmembrane region" description="Helical" evidence="1">
    <location>
        <begin position="79"/>
        <end position="99"/>
    </location>
</feature>
<feature type="transmembrane region" description="Helical" evidence="1">
    <location>
        <begin position="102"/>
        <end position="122"/>
    </location>
</feature>
<feature type="transmembrane region" description="Helical" evidence="1">
    <location>
        <begin position="139"/>
        <end position="159"/>
    </location>
</feature>
<feature type="transmembrane region" description="Helical" evidence="1">
    <location>
        <begin position="165"/>
        <end position="185"/>
    </location>
</feature>
<feature type="transmembrane region" description="Helical" evidence="1">
    <location>
        <begin position="210"/>
        <end position="230"/>
    </location>
</feature>
<feature type="transmembrane region" description="Helical" evidence="1">
    <location>
        <begin position="231"/>
        <end position="251"/>
    </location>
</feature>
<feature type="transmembrane region" description="Helical" evidence="1">
    <location>
        <begin position="261"/>
        <end position="281"/>
    </location>
</feature>
<dbReference type="EC" id="2.5.1.141" evidence="1"/>
<dbReference type="EMBL" id="CP000608">
    <property type="protein sequence ID" value="ABO47469.1"/>
    <property type="molecule type" value="Genomic_DNA"/>
</dbReference>
<dbReference type="RefSeq" id="WP_003027258.1">
    <property type="nucleotide sequence ID" value="NC_009257.1"/>
</dbReference>
<dbReference type="SMR" id="A4IZX0"/>
<dbReference type="KEGG" id="ftw:FTW_1801"/>
<dbReference type="HOGENOM" id="CLU_029631_0_0_6"/>
<dbReference type="UniPathway" id="UPA00834">
    <property type="reaction ID" value="UER00712"/>
</dbReference>
<dbReference type="GO" id="GO:0005886">
    <property type="term" value="C:plasma membrane"/>
    <property type="evidence" value="ECO:0007669"/>
    <property type="project" value="UniProtKB-SubCell"/>
</dbReference>
<dbReference type="GO" id="GO:0008495">
    <property type="term" value="F:protoheme IX farnesyltransferase activity"/>
    <property type="evidence" value="ECO:0007669"/>
    <property type="project" value="UniProtKB-UniRule"/>
</dbReference>
<dbReference type="GO" id="GO:0048034">
    <property type="term" value="P:heme O biosynthetic process"/>
    <property type="evidence" value="ECO:0007669"/>
    <property type="project" value="UniProtKB-UniRule"/>
</dbReference>
<dbReference type="CDD" id="cd13957">
    <property type="entry name" value="PT_UbiA_Cox10"/>
    <property type="match status" value="1"/>
</dbReference>
<dbReference type="Gene3D" id="1.10.357.140">
    <property type="entry name" value="UbiA prenyltransferase"/>
    <property type="match status" value="1"/>
</dbReference>
<dbReference type="HAMAP" id="MF_00154">
    <property type="entry name" value="CyoE_CtaB"/>
    <property type="match status" value="1"/>
</dbReference>
<dbReference type="InterPro" id="IPR006369">
    <property type="entry name" value="Protohaem_IX_farnesylTrfase"/>
</dbReference>
<dbReference type="InterPro" id="IPR000537">
    <property type="entry name" value="UbiA_prenyltransferase"/>
</dbReference>
<dbReference type="InterPro" id="IPR030470">
    <property type="entry name" value="UbiA_prenylTrfase_CS"/>
</dbReference>
<dbReference type="InterPro" id="IPR044878">
    <property type="entry name" value="UbiA_sf"/>
</dbReference>
<dbReference type="NCBIfam" id="TIGR01473">
    <property type="entry name" value="cyoE_ctaB"/>
    <property type="match status" value="1"/>
</dbReference>
<dbReference type="NCBIfam" id="NF003348">
    <property type="entry name" value="PRK04375.1-1"/>
    <property type="match status" value="1"/>
</dbReference>
<dbReference type="PANTHER" id="PTHR43448">
    <property type="entry name" value="PROTOHEME IX FARNESYLTRANSFERASE, MITOCHONDRIAL"/>
    <property type="match status" value="1"/>
</dbReference>
<dbReference type="PANTHER" id="PTHR43448:SF2">
    <property type="entry name" value="PROTOHEME IX FARNESYLTRANSFERASE, MITOCHONDRIAL"/>
    <property type="match status" value="1"/>
</dbReference>
<dbReference type="Pfam" id="PF01040">
    <property type="entry name" value="UbiA"/>
    <property type="match status" value="1"/>
</dbReference>
<dbReference type="PROSITE" id="PS00943">
    <property type="entry name" value="UBIA"/>
    <property type="match status" value="1"/>
</dbReference>
<evidence type="ECO:0000255" key="1">
    <source>
        <dbReference type="HAMAP-Rule" id="MF_00154"/>
    </source>
</evidence>
<accession>A4IZX0</accession>
<comment type="function">
    <text evidence="1">Converts heme B (protoheme IX) to heme O by substitution of the vinyl group on carbon 2 of heme B porphyrin ring with a hydroxyethyl farnesyl side group.</text>
</comment>
<comment type="catalytic activity">
    <reaction evidence="1">
        <text>heme b + (2E,6E)-farnesyl diphosphate + H2O = Fe(II)-heme o + diphosphate</text>
        <dbReference type="Rhea" id="RHEA:28070"/>
        <dbReference type="ChEBI" id="CHEBI:15377"/>
        <dbReference type="ChEBI" id="CHEBI:33019"/>
        <dbReference type="ChEBI" id="CHEBI:60344"/>
        <dbReference type="ChEBI" id="CHEBI:60530"/>
        <dbReference type="ChEBI" id="CHEBI:175763"/>
        <dbReference type="EC" id="2.5.1.141"/>
    </reaction>
</comment>
<comment type="pathway">
    <text evidence="1">Porphyrin-containing compound metabolism; heme O biosynthesis; heme O from protoheme: step 1/1.</text>
</comment>
<comment type="subcellular location">
    <subcellularLocation>
        <location evidence="1">Cell inner membrane</location>
        <topology evidence="1">Multi-pass membrane protein</topology>
    </subcellularLocation>
</comment>
<comment type="miscellaneous">
    <text evidence="1">Carbon 2 of the heme B porphyrin ring is defined according to the Fischer nomenclature.</text>
</comment>
<comment type="similarity">
    <text evidence="1">Belongs to the UbiA prenyltransferase family. Protoheme IX farnesyltransferase subfamily.</text>
</comment>
<reference key="1">
    <citation type="journal article" date="2007" name="PLoS ONE">
        <title>Complete genomic characterization of a pathogenic A.II strain of Francisella tularensis subspecies tularensis.</title>
        <authorList>
            <person name="Beckstrom-Sternberg S.M."/>
            <person name="Auerbach R.K."/>
            <person name="Godbole S."/>
            <person name="Pearson J.V."/>
            <person name="Beckstrom-Sternberg J.S."/>
            <person name="Deng Z."/>
            <person name="Munk C."/>
            <person name="Kubota K."/>
            <person name="Zhou Y."/>
            <person name="Bruce D."/>
            <person name="Noronha J."/>
            <person name="Scheuermann R.H."/>
            <person name="Wang A."/>
            <person name="Wei X."/>
            <person name="Wang J."/>
            <person name="Hao J."/>
            <person name="Wagner D.M."/>
            <person name="Brettin T.S."/>
            <person name="Brown N."/>
            <person name="Gilna P."/>
            <person name="Keim P.S."/>
        </authorList>
    </citation>
    <scope>NUCLEOTIDE SEQUENCE [LARGE SCALE GENOMIC DNA]</scope>
    <source>
        <strain>WY96-3418</strain>
    </source>
</reference>
<gene>
    <name evidence="1" type="primary">cyoE</name>
    <name type="ordered locus">FTW_1801</name>
</gene>
<protein>
    <recommendedName>
        <fullName evidence="1">Protoheme IX farnesyltransferase</fullName>
        <ecNumber evidence="1">2.5.1.141</ecNumber>
    </recommendedName>
    <alternativeName>
        <fullName evidence="1">Heme B farnesyltransferase</fullName>
    </alternativeName>
    <alternativeName>
        <fullName evidence="1">Heme O synthase</fullName>
    </alternativeName>
</protein>
<sequence length="282" mass="31543">MYFKRYLQLAKPGIIFGNLITLTGGFLLATHREIGFEYLPLFVYVMIGVALMIAAGCVFNNIYDKDIDSSMTRTQNRPLVTGDISVIQATIYGTILLILSCLVLYYLVNLLTLWIIIIGFIVYVGIYTVSKRLTIHATVLGGISGAIPPVAGYTAVVNILDYNALALFLILFFWQIPHSYAIAMLYIDDYKKVKLPMLPIVKGIAYTKKIMLFYLALFVVSCALPAVLGSADLFSFIVCMLVALFWMYKSIQSYRTDTDRVFAKTVFKFSIIVITAICLTMG</sequence>
<keyword id="KW-0997">Cell inner membrane</keyword>
<keyword id="KW-1003">Cell membrane</keyword>
<keyword id="KW-0350">Heme biosynthesis</keyword>
<keyword id="KW-0472">Membrane</keyword>
<keyword id="KW-0808">Transferase</keyword>
<keyword id="KW-0812">Transmembrane</keyword>
<keyword id="KW-1133">Transmembrane helix</keyword>